<comment type="function">
    <text evidence="1">Responsible for the release of ribosomes from messenger RNA at the termination of protein biosynthesis. May increase the efficiency of translation by recycling ribosomes from one round of translation to another.</text>
</comment>
<comment type="subcellular location">
    <subcellularLocation>
        <location evidence="1">Cytoplasm</location>
    </subcellularLocation>
</comment>
<comment type="similarity">
    <text evidence="1">Belongs to the RRF family.</text>
</comment>
<reference key="1">
    <citation type="submission" date="2007-02" db="EMBL/GenBank/DDBJ databases">
        <title>Complete sequence of chromosome 1 of Rhodobacter sphaeroides ATCC 17029.</title>
        <authorList>
            <person name="Copeland A."/>
            <person name="Lucas S."/>
            <person name="Lapidus A."/>
            <person name="Barry K."/>
            <person name="Detter J.C."/>
            <person name="Glavina del Rio T."/>
            <person name="Hammon N."/>
            <person name="Israni S."/>
            <person name="Dalin E."/>
            <person name="Tice H."/>
            <person name="Pitluck S."/>
            <person name="Kiss H."/>
            <person name="Brettin T."/>
            <person name="Bruce D."/>
            <person name="Han C."/>
            <person name="Tapia R."/>
            <person name="Gilna P."/>
            <person name="Schmutz J."/>
            <person name="Larimer F."/>
            <person name="Land M."/>
            <person name="Hauser L."/>
            <person name="Kyrpides N."/>
            <person name="Mikhailova N."/>
            <person name="Richardson P."/>
            <person name="Mackenzie C."/>
            <person name="Choudhary M."/>
            <person name="Donohue T.J."/>
            <person name="Kaplan S."/>
        </authorList>
    </citation>
    <scope>NUCLEOTIDE SEQUENCE [LARGE SCALE GENOMIC DNA]</scope>
    <source>
        <strain>ATCC 17029 / ATH 2.4.9</strain>
    </source>
</reference>
<dbReference type="EMBL" id="CP000577">
    <property type="protein sequence ID" value="ABN76473.1"/>
    <property type="molecule type" value="Genomic_DNA"/>
</dbReference>
<dbReference type="RefSeq" id="WP_002719856.1">
    <property type="nucleotide sequence ID" value="NC_009049.1"/>
</dbReference>
<dbReference type="SMR" id="A3PJF7"/>
<dbReference type="GeneID" id="67446455"/>
<dbReference type="KEGG" id="rsh:Rsph17029_1363"/>
<dbReference type="HOGENOM" id="CLU_073981_2_0_5"/>
<dbReference type="GO" id="GO:0005829">
    <property type="term" value="C:cytosol"/>
    <property type="evidence" value="ECO:0007669"/>
    <property type="project" value="GOC"/>
</dbReference>
<dbReference type="GO" id="GO:0043023">
    <property type="term" value="F:ribosomal large subunit binding"/>
    <property type="evidence" value="ECO:0007669"/>
    <property type="project" value="TreeGrafter"/>
</dbReference>
<dbReference type="GO" id="GO:0002184">
    <property type="term" value="P:cytoplasmic translational termination"/>
    <property type="evidence" value="ECO:0007669"/>
    <property type="project" value="TreeGrafter"/>
</dbReference>
<dbReference type="CDD" id="cd00520">
    <property type="entry name" value="RRF"/>
    <property type="match status" value="1"/>
</dbReference>
<dbReference type="FunFam" id="1.10.132.20:FF:000001">
    <property type="entry name" value="Ribosome-recycling factor"/>
    <property type="match status" value="1"/>
</dbReference>
<dbReference type="FunFam" id="3.30.1360.40:FF:000001">
    <property type="entry name" value="Ribosome-recycling factor"/>
    <property type="match status" value="1"/>
</dbReference>
<dbReference type="Gene3D" id="3.30.1360.40">
    <property type="match status" value="1"/>
</dbReference>
<dbReference type="Gene3D" id="1.10.132.20">
    <property type="entry name" value="Ribosome-recycling factor"/>
    <property type="match status" value="1"/>
</dbReference>
<dbReference type="HAMAP" id="MF_00040">
    <property type="entry name" value="RRF"/>
    <property type="match status" value="1"/>
</dbReference>
<dbReference type="InterPro" id="IPR002661">
    <property type="entry name" value="Ribosome_recyc_fac"/>
</dbReference>
<dbReference type="InterPro" id="IPR023584">
    <property type="entry name" value="Ribosome_recyc_fac_dom"/>
</dbReference>
<dbReference type="InterPro" id="IPR036191">
    <property type="entry name" value="RRF_sf"/>
</dbReference>
<dbReference type="NCBIfam" id="TIGR00496">
    <property type="entry name" value="frr"/>
    <property type="match status" value="1"/>
</dbReference>
<dbReference type="PANTHER" id="PTHR20982:SF3">
    <property type="entry name" value="MITOCHONDRIAL RIBOSOME RECYCLING FACTOR PSEUDO 1"/>
    <property type="match status" value="1"/>
</dbReference>
<dbReference type="PANTHER" id="PTHR20982">
    <property type="entry name" value="RIBOSOME RECYCLING FACTOR"/>
    <property type="match status" value="1"/>
</dbReference>
<dbReference type="Pfam" id="PF01765">
    <property type="entry name" value="RRF"/>
    <property type="match status" value="1"/>
</dbReference>
<dbReference type="SUPFAM" id="SSF55194">
    <property type="entry name" value="Ribosome recycling factor, RRF"/>
    <property type="match status" value="1"/>
</dbReference>
<organism>
    <name type="scientific">Cereibacter sphaeroides (strain ATCC 17029 / ATH 2.4.9)</name>
    <name type="common">Rhodobacter sphaeroides</name>
    <dbReference type="NCBI Taxonomy" id="349101"/>
    <lineage>
        <taxon>Bacteria</taxon>
        <taxon>Pseudomonadati</taxon>
        <taxon>Pseudomonadota</taxon>
        <taxon>Alphaproteobacteria</taxon>
        <taxon>Rhodobacterales</taxon>
        <taxon>Paracoccaceae</taxon>
        <taxon>Cereibacter</taxon>
    </lineage>
</organism>
<protein>
    <recommendedName>
        <fullName evidence="1">Ribosome-recycling factor</fullName>
        <shortName evidence="1">RRF</shortName>
    </recommendedName>
    <alternativeName>
        <fullName evidence="1">Ribosome-releasing factor</fullName>
    </alternativeName>
</protein>
<sequence length="188" mass="20994">MSQDDLEIDLDAIQRRMDGAMHALRTEFGSLRTGRASASILEPIHVDAYGQQTPLNQLGTINVPEPRMVVINVWDKGMISKVERAIRDSGIGINPVVDGPIIRLPIPELNEERRKELSKVAAHYAEQARVAIRNVRRDGMDQIKKAKSAGMAEDDQKMWSDEVQALTDKAIAAVDKALEEKQKEIMQV</sequence>
<evidence type="ECO:0000255" key="1">
    <source>
        <dbReference type="HAMAP-Rule" id="MF_00040"/>
    </source>
</evidence>
<accession>A3PJF7</accession>
<gene>
    <name evidence="1" type="primary">frr</name>
    <name type="ordered locus">Rsph17029_1363</name>
</gene>
<name>RRF_CERS1</name>
<proteinExistence type="inferred from homology"/>
<keyword id="KW-0963">Cytoplasm</keyword>
<keyword id="KW-0648">Protein biosynthesis</keyword>
<feature type="chain" id="PRO_0000341033" description="Ribosome-recycling factor">
    <location>
        <begin position="1"/>
        <end position="188"/>
    </location>
</feature>